<accession>Q8D3Q3</accession>
<evidence type="ECO:0000255" key="1">
    <source>
        <dbReference type="HAMAP-Rule" id="MF_00198"/>
    </source>
</evidence>
<comment type="function">
    <text evidence="1">Catalyzes the irreversible transfer of a propylamine group from the amino donor S-adenosylmethioninamine (decarboxy-AdoMet) to putrescine (1,4-diaminobutane) to yield spermidine.</text>
</comment>
<comment type="catalytic activity">
    <reaction evidence="1">
        <text>S-adenosyl 3-(methylsulfanyl)propylamine + putrescine = S-methyl-5'-thioadenosine + spermidine + H(+)</text>
        <dbReference type="Rhea" id="RHEA:12721"/>
        <dbReference type="ChEBI" id="CHEBI:15378"/>
        <dbReference type="ChEBI" id="CHEBI:17509"/>
        <dbReference type="ChEBI" id="CHEBI:57443"/>
        <dbReference type="ChEBI" id="CHEBI:57834"/>
        <dbReference type="ChEBI" id="CHEBI:326268"/>
        <dbReference type="EC" id="2.5.1.16"/>
    </reaction>
</comment>
<comment type="pathway">
    <text evidence="1">Amine and polyamine biosynthesis; spermidine biosynthesis; spermidine from putrescine: step 1/1.</text>
</comment>
<comment type="subunit">
    <text evidence="1">Homodimer or homotetramer.</text>
</comment>
<comment type="subcellular location">
    <subcellularLocation>
        <location evidence="1">Cytoplasm</location>
    </subcellularLocation>
</comment>
<comment type="similarity">
    <text evidence="1">Belongs to the spermidine/spermine synthase family.</text>
</comment>
<feature type="chain" id="PRO_0000156516" description="Polyamine aminopropyltransferase">
    <location>
        <begin position="1"/>
        <end position="299"/>
    </location>
</feature>
<feature type="domain" description="PABS" evidence="1">
    <location>
        <begin position="6"/>
        <end position="252"/>
    </location>
</feature>
<feature type="active site" description="Proton acceptor" evidence="1">
    <location>
        <position position="168"/>
    </location>
</feature>
<feature type="binding site" evidence="1">
    <location>
        <position position="36"/>
    </location>
    <ligand>
        <name>S-methyl-5'-thioadenosine</name>
        <dbReference type="ChEBI" id="CHEBI:17509"/>
    </ligand>
</feature>
<feature type="binding site" evidence="1">
    <location>
        <position position="120"/>
    </location>
    <ligand>
        <name>S-methyl-5'-thioadenosine</name>
        <dbReference type="ChEBI" id="CHEBI:17509"/>
    </ligand>
</feature>
<feature type="binding site" evidence="1">
    <location>
        <begin position="147"/>
        <end position="148"/>
    </location>
    <ligand>
        <name>S-methyl-5'-thioadenosine</name>
        <dbReference type="ChEBI" id="CHEBI:17509"/>
    </ligand>
</feature>
<keyword id="KW-0963">Cytoplasm</keyword>
<keyword id="KW-0620">Polyamine biosynthesis</keyword>
<keyword id="KW-0745">Spermidine biosynthesis</keyword>
<keyword id="KW-0808">Transferase</keyword>
<name>SPEE_VIBVU</name>
<reference key="1">
    <citation type="submission" date="2002-12" db="EMBL/GenBank/DDBJ databases">
        <title>Complete genome sequence of Vibrio vulnificus CMCP6.</title>
        <authorList>
            <person name="Rhee J.H."/>
            <person name="Kim S.Y."/>
            <person name="Chung S.S."/>
            <person name="Kim J.J."/>
            <person name="Moon Y.H."/>
            <person name="Jeong H."/>
            <person name="Choy H.E."/>
        </authorList>
    </citation>
    <scope>NUCLEOTIDE SEQUENCE [LARGE SCALE GENOMIC DNA]</scope>
    <source>
        <strain>CMCP6</strain>
    </source>
</reference>
<organism>
    <name type="scientific">Vibrio vulnificus (strain CMCP6)</name>
    <dbReference type="NCBI Taxonomy" id="216895"/>
    <lineage>
        <taxon>Bacteria</taxon>
        <taxon>Pseudomonadati</taxon>
        <taxon>Pseudomonadota</taxon>
        <taxon>Gammaproteobacteria</taxon>
        <taxon>Vibrionales</taxon>
        <taxon>Vibrionaceae</taxon>
        <taxon>Vibrio</taxon>
    </lineage>
</organism>
<proteinExistence type="inferred from homology"/>
<sequence>MSINPIVLLFALLCTLLSPFSIGQSTIIHEQKSLYQDIVVFEHQDFRCLSFTAKKGERVQTCEYQDPQDKRIYFPYVRMTLAGLLFNPKPERILIIGLGGGSVPSALAELYPESHMDIVEIDPVVSQIAERYFYFQPSHNTRVHTGDARVYIKRAGLKGQKYDFILLDAFNGEYIPEHLMTREFLMETKQLLSSSGVLVANTFSTSKLYDHESATYRSVFGEFYNFKIPQESGNRVILSMLTSLPNQQALQQQAEALASALQPFAIEIENYPSLMTLEADWDEQARLLTDQFSPANLLK</sequence>
<gene>
    <name evidence="1" type="primary">speE</name>
    <name type="ordered locus">VV2_1635</name>
</gene>
<protein>
    <recommendedName>
        <fullName evidence="1">Polyamine aminopropyltransferase</fullName>
    </recommendedName>
    <alternativeName>
        <fullName evidence="1">Putrescine aminopropyltransferase</fullName>
        <shortName evidence="1">PAPT</shortName>
    </alternativeName>
    <alternativeName>
        <fullName evidence="1">Spermidine synthase</fullName>
        <shortName evidence="1">SPDS</shortName>
        <shortName evidence="1">SPDSY</shortName>
        <ecNumber evidence="1">2.5.1.16</ecNumber>
    </alternativeName>
</protein>
<dbReference type="EC" id="2.5.1.16" evidence="1"/>
<dbReference type="EMBL" id="AE016796">
    <property type="protein sequence ID" value="AAO08493.1"/>
    <property type="molecule type" value="Genomic_DNA"/>
</dbReference>
<dbReference type="RefSeq" id="WP_011082476.1">
    <property type="nucleotide sequence ID" value="NC_004460.2"/>
</dbReference>
<dbReference type="SMR" id="Q8D3Q3"/>
<dbReference type="KEGG" id="vvu:VV2_1635"/>
<dbReference type="HOGENOM" id="CLU_060070_2_0_6"/>
<dbReference type="UniPathway" id="UPA00248">
    <property type="reaction ID" value="UER00314"/>
</dbReference>
<dbReference type="Proteomes" id="UP000002275">
    <property type="component" value="Chromosome 2"/>
</dbReference>
<dbReference type="GO" id="GO:0005737">
    <property type="term" value="C:cytoplasm"/>
    <property type="evidence" value="ECO:0007669"/>
    <property type="project" value="UniProtKB-SubCell"/>
</dbReference>
<dbReference type="GO" id="GO:0004766">
    <property type="term" value="F:spermidine synthase activity"/>
    <property type="evidence" value="ECO:0007669"/>
    <property type="project" value="UniProtKB-UniRule"/>
</dbReference>
<dbReference type="GO" id="GO:0010487">
    <property type="term" value="F:thermospermine synthase activity"/>
    <property type="evidence" value="ECO:0007669"/>
    <property type="project" value="UniProtKB-ARBA"/>
</dbReference>
<dbReference type="GO" id="GO:0008295">
    <property type="term" value="P:spermidine biosynthetic process"/>
    <property type="evidence" value="ECO:0007669"/>
    <property type="project" value="UniProtKB-UniRule"/>
</dbReference>
<dbReference type="CDD" id="cd02440">
    <property type="entry name" value="AdoMet_MTases"/>
    <property type="match status" value="1"/>
</dbReference>
<dbReference type="Gene3D" id="3.40.50.150">
    <property type="entry name" value="Vaccinia Virus protein VP39"/>
    <property type="match status" value="1"/>
</dbReference>
<dbReference type="HAMAP" id="MF_00198">
    <property type="entry name" value="Spermidine_synth"/>
    <property type="match status" value="1"/>
</dbReference>
<dbReference type="InterPro" id="IPR030374">
    <property type="entry name" value="PABS"/>
</dbReference>
<dbReference type="InterPro" id="IPR029063">
    <property type="entry name" value="SAM-dependent_MTases_sf"/>
</dbReference>
<dbReference type="InterPro" id="IPR001045">
    <property type="entry name" value="Spermi_synthase"/>
</dbReference>
<dbReference type="NCBIfam" id="NF037959">
    <property type="entry name" value="MFS_SpdSyn"/>
    <property type="match status" value="1"/>
</dbReference>
<dbReference type="PANTHER" id="PTHR43317">
    <property type="entry name" value="THERMOSPERMINE SYNTHASE ACAULIS5"/>
    <property type="match status" value="1"/>
</dbReference>
<dbReference type="PANTHER" id="PTHR43317:SF1">
    <property type="entry name" value="THERMOSPERMINE SYNTHASE ACAULIS5"/>
    <property type="match status" value="1"/>
</dbReference>
<dbReference type="Pfam" id="PF01564">
    <property type="entry name" value="Spermine_synth"/>
    <property type="match status" value="1"/>
</dbReference>
<dbReference type="SUPFAM" id="SSF53335">
    <property type="entry name" value="S-adenosyl-L-methionine-dependent methyltransferases"/>
    <property type="match status" value="1"/>
</dbReference>
<dbReference type="PROSITE" id="PS51006">
    <property type="entry name" value="PABS_2"/>
    <property type="match status" value="1"/>
</dbReference>